<comment type="catalytic activity">
    <reaction evidence="1">
        <text>CMP + ATP = CDP + ADP</text>
        <dbReference type="Rhea" id="RHEA:11600"/>
        <dbReference type="ChEBI" id="CHEBI:30616"/>
        <dbReference type="ChEBI" id="CHEBI:58069"/>
        <dbReference type="ChEBI" id="CHEBI:60377"/>
        <dbReference type="ChEBI" id="CHEBI:456216"/>
        <dbReference type="EC" id="2.7.4.25"/>
    </reaction>
</comment>
<comment type="catalytic activity">
    <reaction evidence="1">
        <text>dCMP + ATP = dCDP + ADP</text>
        <dbReference type="Rhea" id="RHEA:25094"/>
        <dbReference type="ChEBI" id="CHEBI:30616"/>
        <dbReference type="ChEBI" id="CHEBI:57566"/>
        <dbReference type="ChEBI" id="CHEBI:58593"/>
        <dbReference type="ChEBI" id="CHEBI:456216"/>
        <dbReference type="EC" id="2.7.4.25"/>
    </reaction>
</comment>
<comment type="subcellular location">
    <subcellularLocation>
        <location evidence="1">Cytoplasm</location>
    </subcellularLocation>
</comment>
<comment type="similarity">
    <text evidence="1">Belongs to the cytidylate kinase family. Type 1 subfamily.</text>
</comment>
<protein>
    <recommendedName>
        <fullName evidence="1">Cytidylate kinase</fullName>
        <shortName evidence="1">CK</shortName>
        <ecNumber evidence="1">2.7.4.25</ecNumber>
    </recommendedName>
    <alternativeName>
        <fullName evidence="1">Cytidine monophosphate kinase</fullName>
        <shortName evidence="1">CMP kinase</shortName>
    </alternativeName>
</protein>
<reference key="1">
    <citation type="journal article" date="2006" name="Proc. Natl. Acad. Sci. U.S.A.">
        <title>Comparative genomics of the lactic acid bacteria.</title>
        <authorList>
            <person name="Makarova K.S."/>
            <person name="Slesarev A."/>
            <person name="Wolf Y.I."/>
            <person name="Sorokin A."/>
            <person name="Mirkin B."/>
            <person name="Koonin E.V."/>
            <person name="Pavlov A."/>
            <person name="Pavlova N."/>
            <person name="Karamychev V."/>
            <person name="Polouchine N."/>
            <person name="Shakhova V."/>
            <person name="Grigoriev I."/>
            <person name="Lou Y."/>
            <person name="Rohksar D."/>
            <person name="Lucas S."/>
            <person name="Huang K."/>
            <person name="Goodstein D.M."/>
            <person name="Hawkins T."/>
            <person name="Plengvidhya V."/>
            <person name="Welker D."/>
            <person name="Hughes J."/>
            <person name="Goh Y."/>
            <person name="Benson A."/>
            <person name="Baldwin K."/>
            <person name="Lee J.-H."/>
            <person name="Diaz-Muniz I."/>
            <person name="Dosti B."/>
            <person name="Smeianov V."/>
            <person name="Wechter W."/>
            <person name="Barabote R."/>
            <person name="Lorca G."/>
            <person name="Altermann E."/>
            <person name="Barrangou R."/>
            <person name="Ganesan B."/>
            <person name="Xie Y."/>
            <person name="Rawsthorne H."/>
            <person name="Tamir D."/>
            <person name="Parker C."/>
            <person name="Breidt F."/>
            <person name="Broadbent J.R."/>
            <person name="Hutkins R."/>
            <person name="O'Sullivan D."/>
            <person name="Steele J."/>
            <person name="Unlu G."/>
            <person name="Saier M.H. Jr."/>
            <person name="Klaenhammer T."/>
            <person name="Richardson P."/>
            <person name="Kozyavkin S."/>
            <person name="Weimer B.C."/>
            <person name="Mills D.A."/>
        </authorList>
    </citation>
    <scope>NUCLEOTIDE SEQUENCE [LARGE SCALE GENOMIC DNA]</scope>
    <source>
        <strain>ATCC 25745 / CCUG 21536 / LMG 10740 / 183-1w</strain>
    </source>
</reference>
<organism>
    <name type="scientific">Pediococcus pentosaceus (strain ATCC 25745 / CCUG 21536 / LMG 10740 / 183-1w)</name>
    <dbReference type="NCBI Taxonomy" id="278197"/>
    <lineage>
        <taxon>Bacteria</taxon>
        <taxon>Bacillati</taxon>
        <taxon>Bacillota</taxon>
        <taxon>Bacilli</taxon>
        <taxon>Lactobacillales</taxon>
        <taxon>Lactobacillaceae</taxon>
        <taxon>Pediococcus</taxon>
    </lineage>
</organism>
<evidence type="ECO:0000255" key="1">
    <source>
        <dbReference type="HAMAP-Rule" id="MF_00238"/>
    </source>
</evidence>
<keyword id="KW-0067">ATP-binding</keyword>
<keyword id="KW-0963">Cytoplasm</keyword>
<keyword id="KW-0418">Kinase</keyword>
<keyword id="KW-0547">Nucleotide-binding</keyword>
<keyword id="KW-0808">Transferase</keyword>
<name>KCY_PEDPA</name>
<sequence>MNNKYQIAIDGPASAGKSTVAKIVAKDLQYVYCDTGAMYRVVTLKAIQNGIDLNDETKISEMLNDTDIRFEPGEPVQKVFLDGNEVTEDIRQANVTNSVSTIAAQKAVREVLTNWQRDLAKNGGIVMDGRDIGSAVLPNAEVKIFLIASVQERAERRYKENIAKGMETDLEQLKKEIEIRDHKDSTRKISPLTKASDAIEVDTTSMSIQDVVNEILRIVENASKRK</sequence>
<gene>
    <name evidence="1" type="primary">cmk</name>
    <name type="ordered locus">PEPE_1080</name>
</gene>
<dbReference type="EC" id="2.7.4.25" evidence="1"/>
<dbReference type="EMBL" id="CP000422">
    <property type="protein sequence ID" value="ABJ68135.1"/>
    <property type="molecule type" value="Genomic_DNA"/>
</dbReference>
<dbReference type="RefSeq" id="WP_002833207.1">
    <property type="nucleotide sequence ID" value="NC_008525.1"/>
</dbReference>
<dbReference type="SMR" id="Q03F87"/>
<dbReference type="STRING" id="278197.PEPE_1080"/>
<dbReference type="GeneID" id="33062891"/>
<dbReference type="KEGG" id="ppe:PEPE_1080"/>
<dbReference type="eggNOG" id="COG0283">
    <property type="taxonomic scope" value="Bacteria"/>
</dbReference>
<dbReference type="HOGENOM" id="CLU_079959_0_2_9"/>
<dbReference type="OrthoDB" id="9807434at2"/>
<dbReference type="Proteomes" id="UP000000773">
    <property type="component" value="Chromosome"/>
</dbReference>
<dbReference type="GO" id="GO:0005829">
    <property type="term" value="C:cytosol"/>
    <property type="evidence" value="ECO:0007669"/>
    <property type="project" value="TreeGrafter"/>
</dbReference>
<dbReference type="GO" id="GO:0005524">
    <property type="term" value="F:ATP binding"/>
    <property type="evidence" value="ECO:0007669"/>
    <property type="project" value="UniProtKB-UniRule"/>
</dbReference>
<dbReference type="GO" id="GO:0036430">
    <property type="term" value="F:CMP kinase activity"/>
    <property type="evidence" value="ECO:0007669"/>
    <property type="project" value="RHEA"/>
</dbReference>
<dbReference type="GO" id="GO:0036431">
    <property type="term" value="F:dCMP kinase activity"/>
    <property type="evidence" value="ECO:0007669"/>
    <property type="project" value="RHEA"/>
</dbReference>
<dbReference type="GO" id="GO:0015949">
    <property type="term" value="P:nucleobase-containing small molecule interconversion"/>
    <property type="evidence" value="ECO:0007669"/>
    <property type="project" value="TreeGrafter"/>
</dbReference>
<dbReference type="GO" id="GO:0006220">
    <property type="term" value="P:pyrimidine nucleotide metabolic process"/>
    <property type="evidence" value="ECO:0007669"/>
    <property type="project" value="UniProtKB-UniRule"/>
</dbReference>
<dbReference type="CDD" id="cd02020">
    <property type="entry name" value="CMPK"/>
    <property type="match status" value="1"/>
</dbReference>
<dbReference type="FunFam" id="3.40.50.300:FF:000484">
    <property type="entry name" value="Cytidylate kinase"/>
    <property type="match status" value="1"/>
</dbReference>
<dbReference type="Gene3D" id="3.40.50.300">
    <property type="entry name" value="P-loop containing nucleotide triphosphate hydrolases"/>
    <property type="match status" value="1"/>
</dbReference>
<dbReference type="HAMAP" id="MF_00238">
    <property type="entry name" value="Cytidyl_kinase_type1"/>
    <property type="match status" value="1"/>
</dbReference>
<dbReference type="InterPro" id="IPR003136">
    <property type="entry name" value="Cytidylate_kin"/>
</dbReference>
<dbReference type="InterPro" id="IPR011994">
    <property type="entry name" value="Cytidylate_kinase_dom"/>
</dbReference>
<dbReference type="InterPro" id="IPR027417">
    <property type="entry name" value="P-loop_NTPase"/>
</dbReference>
<dbReference type="NCBIfam" id="TIGR00017">
    <property type="entry name" value="cmk"/>
    <property type="match status" value="1"/>
</dbReference>
<dbReference type="PANTHER" id="PTHR21299:SF2">
    <property type="entry name" value="CYTIDYLATE KINASE"/>
    <property type="match status" value="1"/>
</dbReference>
<dbReference type="PANTHER" id="PTHR21299">
    <property type="entry name" value="CYTIDYLATE KINASE/PANTOATE-BETA-ALANINE LIGASE"/>
    <property type="match status" value="1"/>
</dbReference>
<dbReference type="Pfam" id="PF02224">
    <property type="entry name" value="Cytidylate_kin"/>
    <property type="match status" value="1"/>
</dbReference>
<dbReference type="SUPFAM" id="SSF52540">
    <property type="entry name" value="P-loop containing nucleoside triphosphate hydrolases"/>
    <property type="match status" value="1"/>
</dbReference>
<accession>Q03F87</accession>
<proteinExistence type="inferred from homology"/>
<feature type="chain" id="PRO_1000119024" description="Cytidylate kinase">
    <location>
        <begin position="1"/>
        <end position="226"/>
    </location>
</feature>
<feature type="binding site" evidence="1">
    <location>
        <begin position="11"/>
        <end position="19"/>
    </location>
    <ligand>
        <name>ATP</name>
        <dbReference type="ChEBI" id="CHEBI:30616"/>
    </ligand>
</feature>